<organismHost>
    <name type="scientific">Bacillus subtilis</name>
    <dbReference type="NCBI Taxonomy" id="1423"/>
</organismHost>
<accession>P10437</accession>
<name>YIME_BPPH1</name>
<feature type="chain" id="PRO_0000077731" description="Uncharacterized immunity region protein 14">
    <location>
        <begin position="1"/>
        <end position="65"/>
    </location>
</feature>
<dbReference type="EMBL" id="M11920">
    <property type="protein sequence ID" value="AAA88395.1"/>
    <property type="molecule type" value="Genomic_DNA"/>
</dbReference>
<dbReference type="PIR" id="D27234">
    <property type="entry name" value="IMBP14"/>
</dbReference>
<dbReference type="SMR" id="P10437"/>
<reference key="1">
    <citation type="journal article" date="1985" name="Gene">
        <title>Nucleotide sequence of the immunity region of Bacillus subtilis bacteriophage phi 105: identification of the repressor gene and its mRNA and protein products.</title>
        <authorList>
            <person name="Cully D.F."/>
            <person name="Garro A.J."/>
        </authorList>
    </citation>
    <scope>NUCLEOTIDE SEQUENCE [GENOMIC DNA]</scope>
</reference>
<proteinExistence type="predicted"/>
<protein>
    <recommendedName>
        <fullName>Uncharacterized immunity region protein 14</fullName>
    </recommendedName>
</protein>
<sequence length="65" mass="7332">MPNAPATASNVERLGLYLSLSISARYERERLAFSASCTWVNLRSFLMALILCPTVIMITYLLYNT</sequence>
<organism>
    <name type="scientific">Bacillus phage phi105</name>
    <name type="common">Bacteriophage phi-105</name>
    <dbReference type="NCBI Taxonomy" id="10717"/>
    <lineage>
        <taxon>Viruses</taxon>
        <taxon>Duplodnaviria</taxon>
        <taxon>Heunggongvirae</taxon>
        <taxon>Uroviricota</taxon>
        <taxon>Caudoviricetes</taxon>
        <taxon>Spizizenvirus</taxon>
        <taxon>Spizizenvirus sv105</taxon>
    </lineage>
</organism>